<comment type="function">
    <text evidence="1">Heme-dependent dioxygenase that catalyzes the oxidative cleavage of the L-tryptophan (L-Trp) pyrrole ring and converts L-tryptophan to N-formyl-L-kynurenine. Catalyzes the oxidative cleavage of the indole moiety.</text>
</comment>
<comment type="catalytic activity">
    <reaction evidence="1">
        <text>L-tryptophan + O2 = N-formyl-L-kynurenine</text>
        <dbReference type="Rhea" id="RHEA:24536"/>
        <dbReference type="ChEBI" id="CHEBI:15379"/>
        <dbReference type="ChEBI" id="CHEBI:57912"/>
        <dbReference type="ChEBI" id="CHEBI:58629"/>
        <dbReference type="EC" id="1.13.11.11"/>
    </reaction>
</comment>
<comment type="cofactor">
    <cofactor evidence="1">
        <name>heme</name>
        <dbReference type="ChEBI" id="CHEBI:30413"/>
    </cofactor>
    <text evidence="1">Binds 1 heme group per subunit.</text>
</comment>
<comment type="pathway">
    <text evidence="1">Amino-acid degradation; L-tryptophan degradation via kynurenine pathway; L-kynurenine from L-tryptophan: step 1/2.</text>
</comment>
<comment type="subunit">
    <text evidence="1">Homotetramer.</text>
</comment>
<comment type="similarity">
    <text evidence="1">Belongs to the tryptophan 2,3-dioxygenase family.</text>
</comment>
<comment type="sequence caution" evidence="3">
    <conflict type="erroneous initiation">
        <sequence resource="EMBL-CDS" id="ABX14413"/>
    </conflict>
</comment>
<name>T23O_BURM1</name>
<sequence>MQPPGNDAPAGCPFSGARAQGTQAAHEAPHVPGDAGEQAGWHNAQLDFSKSMSYGDYLSLNAILNAQHPLSPDHNEMLFIIQHQTSELWMKLALFELRGALDAVRSDALPPAFKMLARVSRILEQLVQAWNVLSTMTPSEYSAMRPYLGQSSGFQSYQYRQLEFLLGNKNAQMLQPHAHRPDILEQVRATLDAPSFYDEVVRLLARRGFPIAPSRLDRDWRQPTQHDETVEAAWLEVYRHPQQHWELYEMAEELVDLEDAFRQWRFRHVTTVERIIGFKQGTGGTSGAPYLRKMLDVVLFPELWHVRTTL</sequence>
<gene>
    <name evidence="1" type="primary">kynA</name>
    <name type="ordered locus">Bmul_0718</name>
    <name type="ordered locus">BMULJ_02542</name>
</gene>
<organism>
    <name type="scientific">Burkholderia multivorans (strain ATCC 17616 / 249)</name>
    <dbReference type="NCBI Taxonomy" id="395019"/>
    <lineage>
        <taxon>Bacteria</taxon>
        <taxon>Pseudomonadati</taxon>
        <taxon>Pseudomonadota</taxon>
        <taxon>Betaproteobacteria</taxon>
        <taxon>Burkholderiales</taxon>
        <taxon>Burkholderiaceae</taxon>
        <taxon>Burkholderia</taxon>
        <taxon>Burkholderia cepacia complex</taxon>
    </lineage>
</organism>
<protein>
    <recommendedName>
        <fullName evidence="1">Tryptophan 2,3-dioxygenase</fullName>
        <shortName evidence="1">TDO</shortName>
        <ecNumber evidence="1">1.13.11.11</ecNumber>
    </recommendedName>
    <alternativeName>
        <fullName evidence="1">Tryptamin 2,3-dioxygenase</fullName>
    </alternativeName>
    <alternativeName>
        <fullName evidence="1">Tryptophan oxygenase</fullName>
        <shortName evidence="1">TO</shortName>
        <shortName evidence="1">TRPO</shortName>
    </alternativeName>
    <alternativeName>
        <fullName evidence="1">Tryptophan pyrrolase</fullName>
    </alternativeName>
    <alternativeName>
        <fullName evidence="1">Tryptophanase</fullName>
    </alternativeName>
</protein>
<dbReference type="EC" id="1.13.11.11" evidence="1"/>
<dbReference type="EMBL" id="CP000868">
    <property type="protein sequence ID" value="ABX14413.1"/>
    <property type="status" value="ALT_INIT"/>
    <property type="molecule type" value="Genomic_DNA"/>
</dbReference>
<dbReference type="EMBL" id="AP009385">
    <property type="protein sequence ID" value="BAG44433.1"/>
    <property type="molecule type" value="Genomic_DNA"/>
</dbReference>
<dbReference type="RefSeq" id="WP_006398462.1">
    <property type="nucleotide sequence ID" value="NC_010804.1"/>
</dbReference>
<dbReference type="SMR" id="A9AGH1"/>
<dbReference type="STRING" id="395019.BMULJ_02542"/>
<dbReference type="KEGG" id="bmj:BMULJ_02542"/>
<dbReference type="KEGG" id="bmu:Bmul_0718"/>
<dbReference type="eggNOG" id="COG3483">
    <property type="taxonomic scope" value="Bacteria"/>
</dbReference>
<dbReference type="HOGENOM" id="CLU_063240_0_0_4"/>
<dbReference type="UniPathway" id="UPA00333">
    <property type="reaction ID" value="UER00453"/>
</dbReference>
<dbReference type="Proteomes" id="UP000008815">
    <property type="component" value="Chromosome 1"/>
</dbReference>
<dbReference type="GO" id="GO:0020037">
    <property type="term" value="F:heme binding"/>
    <property type="evidence" value="ECO:0000250"/>
    <property type="project" value="UniProtKB"/>
</dbReference>
<dbReference type="GO" id="GO:0046872">
    <property type="term" value="F:metal ion binding"/>
    <property type="evidence" value="ECO:0007669"/>
    <property type="project" value="UniProtKB-KW"/>
</dbReference>
<dbReference type="GO" id="GO:0004833">
    <property type="term" value="F:tryptophan 2,3-dioxygenase activity"/>
    <property type="evidence" value="ECO:0000250"/>
    <property type="project" value="UniProtKB"/>
</dbReference>
<dbReference type="GO" id="GO:0019442">
    <property type="term" value="P:L-tryptophan catabolic process to acetyl-CoA"/>
    <property type="evidence" value="ECO:0007669"/>
    <property type="project" value="TreeGrafter"/>
</dbReference>
<dbReference type="GO" id="GO:0019441">
    <property type="term" value="P:L-tryptophan catabolic process to kynurenine"/>
    <property type="evidence" value="ECO:0000250"/>
    <property type="project" value="UniProtKB"/>
</dbReference>
<dbReference type="FunFam" id="1.20.58.480:FF:000001">
    <property type="entry name" value="Tryptophan 2,3-dioxygenase"/>
    <property type="match status" value="1"/>
</dbReference>
<dbReference type="Gene3D" id="1.20.58.480">
    <property type="match status" value="1"/>
</dbReference>
<dbReference type="HAMAP" id="MF_01972">
    <property type="entry name" value="T23O"/>
    <property type="match status" value="1"/>
</dbReference>
<dbReference type="InterPro" id="IPR037217">
    <property type="entry name" value="Trp/Indoleamine_2_3_dOase-like"/>
</dbReference>
<dbReference type="InterPro" id="IPR017485">
    <property type="entry name" value="Trp_2-3-dOase_bac"/>
</dbReference>
<dbReference type="InterPro" id="IPR004981">
    <property type="entry name" value="Trp_2_3_dOase"/>
</dbReference>
<dbReference type="NCBIfam" id="TIGR03036">
    <property type="entry name" value="trp_2_3_diox"/>
    <property type="match status" value="1"/>
</dbReference>
<dbReference type="PANTHER" id="PTHR10138">
    <property type="entry name" value="TRYPTOPHAN 2,3-DIOXYGENASE"/>
    <property type="match status" value="1"/>
</dbReference>
<dbReference type="PANTHER" id="PTHR10138:SF0">
    <property type="entry name" value="TRYPTOPHAN 2,3-DIOXYGENASE"/>
    <property type="match status" value="1"/>
</dbReference>
<dbReference type="Pfam" id="PF03301">
    <property type="entry name" value="Trp_dioxygenase"/>
    <property type="match status" value="1"/>
</dbReference>
<dbReference type="SUPFAM" id="SSF140959">
    <property type="entry name" value="Indolic compounds 2,3-dioxygenase-like"/>
    <property type="match status" value="1"/>
</dbReference>
<accession>A9AGH1</accession>
<accession>B3D321</accession>
<evidence type="ECO:0000255" key="1">
    <source>
        <dbReference type="HAMAP-Rule" id="MF_01972"/>
    </source>
</evidence>
<evidence type="ECO:0000256" key="2">
    <source>
        <dbReference type="SAM" id="MobiDB-lite"/>
    </source>
</evidence>
<evidence type="ECO:0000305" key="3"/>
<proteinExistence type="inferred from homology"/>
<feature type="chain" id="PRO_0000360102" description="Tryptophan 2,3-dioxygenase">
    <location>
        <begin position="1"/>
        <end position="310"/>
    </location>
</feature>
<feature type="region of interest" description="Disordered" evidence="2">
    <location>
        <begin position="1"/>
        <end position="39"/>
    </location>
</feature>
<feature type="binding site" evidence="1">
    <location>
        <begin position="79"/>
        <end position="83"/>
    </location>
    <ligand>
        <name>substrate</name>
    </ligand>
</feature>
<feature type="binding site" evidence="1">
    <location>
        <position position="141"/>
    </location>
    <ligand>
        <name>substrate</name>
    </ligand>
</feature>
<feature type="binding site" evidence="1">
    <location>
        <position position="145"/>
    </location>
    <ligand>
        <name>substrate</name>
    </ligand>
</feature>
<feature type="binding site" description="axial binding residue" evidence="1">
    <location>
        <position position="268"/>
    </location>
    <ligand>
        <name>heme</name>
        <dbReference type="ChEBI" id="CHEBI:30413"/>
    </ligand>
    <ligandPart>
        <name>Fe</name>
        <dbReference type="ChEBI" id="CHEBI:18248"/>
    </ligandPart>
</feature>
<feature type="binding site" evidence="1">
    <location>
        <position position="282"/>
    </location>
    <ligand>
        <name>substrate</name>
    </ligand>
</feature>
<reference key="1">
    <citation type="submission" date="2007-10" db="EMBL/GenBank/DDBJ databases">
        <title>Complete sequence of chromosome 1 of Burkholderia multivorans ATCC 17616.</title>
        <authorList>
            <person name="Copeland A."/>
            <person name="Lucas S."/>
            <person name="Lapidus A."/>
            <person name="Barry K."/>
            <person name="Glavina del Rio T."/>
            <person name="Dalin E."/>
            <person name="Tice H."/>
            <person name="Pitluck S."/>
            <person name="Chain P."/>
            <person name="Malfatti S."/>
            <person name="Shin M."/>
            <person name="Vergez L."/>
            <person name="Schmutz J."/>
            <person name="Larimer F."/>
            <person name="Land M."/>
            <person name="Hauser L."/>
            <person name="Kyrpides N."/>
            <person name="Kim E."/>
            <person name="Tiedje J."/>
            <person name="Richardson P."/>
        </authorList>
    </citation>
    <scope>NUCLEOTIDE SEQUENCE [LARGE SCALE GENOMIC DNA]</scope>
    <source>
        <strain>ATCC 17616 / 249</strain>
    </source>
</reference>
<reference key="2">
    <citation type="submission" date="2007-04" db="EMBL/GenBank/DDBJ databases">
        <title>Complete genome sequence of Burkholderia multivorans ATCC 17616.</title>
        <authorList>
            <person name="Ohtsubo Y."/>
            <person name="Yamashita A."/>
            <person name="Kurokawa K."/>
            <person name="Takami H."/>
            <person name="Yuhara S."/>
            <person name="Nishiyama E."/>
            <person name="Endo R."/>
            <person name="Miyazaki R."/>
            <person name="Ono A."/>
            <person name="Yano K."/>
            <person name="Ito M."/>
            <person name="Sota M."/>
            <person name="Yuji N."/>
            <person name="Hattori M."/>
            <person name="Tsuda M."/>
        </authorList>
    </citation>
    <scope>NUCLEOTIDE SEQUENCE [LARGE SCALE GENOMIC DNA]</scope>
    <source>
        <strain>ATCC 17616 / 249</strain>
    </source>
</reference>
<keyword id="KW-0223">Dioxygenase</keyword>
<keyword id="KW-0349">Heme</keyword>
<keyword id="KW-0408">Iron</keyword>
<keyword id="KW-0479">Metal-binding</keyword>
<keyword id="KW-0560">Oxidoreductase</keyword>
<keyword id="KW-1185">Reference proteome</keyword>
<keyword id="KW-0823">Tryptophan catabolism</keyword>